<accession>Q0SHX9</accession>
<organism>
    <name type="scientific">Rhodococcus jostii (strain RHA1)</name>
    <dbReference type="NCBI Taxonomy" id="101510"/>
    <lineage>
        <taxon>Bacteria</taxon>
        <taxon>Bacillati</taxon>
        <taxon>Actinomycetota</taxon>
        <taxon>Actinomycetes</taxon>
        <taxon>Mycobacteriales</taxon>
        <taxon>Nocardiaceae</taxon>
        <taxon>Rhodococcus</taxon>
    </lineage>
</organism>
<reference key="1">
    <citation type="journal article" date="2006" name="Proc. Natl. Acad. Sci. U.S.A.">
        <title>The complete genome of Rhodococcus sp. RHA1 provides insights into a catabolic powerhouse.</title>
        <authorList>
            <person name="McLeod M.P."/>
            <person name="Warren R.L."/>
            <person name="Hsiao W.W.L."/>
            <person name="Araki N."/>
            <person name="Myhre M."/>
            <person name="Fernandes C."/>
            <person name="Miyazawa D."/>
            <person name="Wong W."/>
            <person name="Lillquist A.L."/>
            <person name="Wang D."/>
            <person name="Dosanjh M."/>
            <person name="Hara H."/>
            <person name="Petrescu A."/>
            <person name="Morin R.D."/>
            <person name="Yang G."/>
            <person name="Stott J.M."/>
            <person name="Schein J.E."/>
            <person name="Shin H."/>
            <person name="Smailus D."/>
            <person name="Siddiqui A.S."/>
            <person name="Marra M.A."/>
            <person name="Jones S.J.M."/>
            <person name="Holt R."/>
            <person name="Brinkman F.S.L."/>
            <person name="Miyauchi K."/>
            <person name="Fukuda M."/>
            <person name="Davies J.E."/>
            <person name="Mohn W.W."/>
            <person name="Eltis L.D."/>
        </authorList>
    </citation>
    <scope>NUCLEOTIDE SEQUENCE [LARGE SCALE GENOMIC DNA]</scope>
    <source>
        <strain>RHA1</strain>
    </source>
</reference>
<name>HIS8_RHOJR</name>
<comment type="catalytic activity">
    <reaction evidence="1">
        <text>L-histidinol phosphate + 2-oxoglutarate = 3-(imidazol-4-yl)-2-oxopropyl phosphate + L-glutamate</text>
        <dbReference type="Rhea" id="RHEA:23744"/>
        <dbReference type="ChEBI" id="CHEBI:16810"/>
        <dbReference type="ChEBI" id="CHEBI:29985"/>
        <dbReference type="ChEBI" id="CHEBI:57766"/>
        <dbReference type="ChEBI" id="CHEBI:57980"/>
        <dbReference type="EC" id="2.6.1.9"/>
    </reaction>
</comment>
<comment type="cofactor">
    <cofactor evidence="1">
        <name>pyridoxal 5'-phosphate</name>
        <dbReference type="ChEBI" id="CHEBI:597326"/>
    </cofactor>
</comment>
<comment type="pathway">
    <text evidence="1">Amino-acid biosynthesis; L-histidine biosynthesis; L-histidine from 5-phospho-alpha-D-ribose 1-diphosphate: step 7/9.</text>
</comment>
<comment type="subunit">
    <text evidence="1">Homodimer.</text>
</comment>
<comment type="similarity">
    <text evidence="1">Belongs to the class-II pyridoxal-phosphate-dependent aminotransferase family. Histidinol-phosphate aminotransferase subfamily.</text>
</comment>
<feature type="chain" id="PRO_1000063498" description="Histidinol-phosphate aminotransferase">
    <location>
        <begin position="1"/>
        <end position="380"/>
    </location>
</feature>
<feature type="modified residue" description="N6-(pyridoxal phosphate)lysine" evidence="1">
    <location>
        <position position="235"/>
    </location>
</feature>
<proteinExistence type="inferred from homology"/>
<dbReference type="EC" id="2.6.1.9" evidence="1"/>
<dbReference type="EMBL" id="CP000431">
    <property type="protein sequence ID" value="ABG92857.1"/>
    <property type="molecule type" value="Genomic_DNA"/>
</dbReference>
<dbReference type="RefSeq" id="WP_011594185.1">
    <property type="nucleotide sequence ID" value="NC_008268.1"/>
</dbReference>
<dbReference type="SMR" id="Q0SHX9"/>
<dbReference type="KEGG" id="rha:RHA1_ro01030"/>
<dbReference type="PATRIC" id="fig|101510.16.peg.1050"/>
<dbReference type="eggNOG" id="COG0079">
    <property type="taxonomic scope" value="Bacteria"/>
</dbReference>
<dbReference type="HOGENOM" id="CLU_017584_3_1_11"/>
<dbReference type="OrthoDB" id="9809616at2"/>
<dbReference type="UniPathway" id="UPA00031">
    <property type="reaction ID" value="UER00012"/>
</dbReference>
<dbReference type="Proteomes" id="UP000008710">
    <property type="component" value="Chromosome"/>
</dbReference>
<dbReference type="GO" id="GO:0004400">
    <property type="term" value="F:histidinol-phosphate transaminase activity"/>
    <property type="evidence" value="ECO:0007669"/>
    <property type="project" value="UniProtKB-UniRule"/>
</dbReference>
<dbReference type="GO" id="GO:0030170">
    <property type="term" value="F:pyridoxal phosphate binding"/>
    <property type="evidence" value="ECO:0007669"/>
    <property type="project" value="InterPro"/>
</dbReference>
<dbReference type="GO" id="GO:0000105">
    <property type="term" value="P:L-histidine biosynthetic process"/>
    <property type="evidence" value="ECO:0007669"/>
    <property type="project" value="UniProtKB-UniRule"/>
</dbReference>
<dbReference type="CDD" id="cd00609">
    <property type="entry name" value="AAT_like"/>
    <property type="match status" value="1"/>
</dbReference>
<dbReference type="Gene3D" id="3.90.1150.10">
    <property type="entry name" value="Aspartate Aminotransferase, domain 1"/>
    <property type="match status" value="1"/>
</dbReference>
<dbReference type="Gene3D" id="3.40.640.10">
    <property type="entry name" value="Type I PLP-dependent aspartate aminotransferase-like (Major domain)"/>
    <property type="match status" value="1"/>
</dbReference>
<dbReference type="HAMAP" id="MF_01023">
    <property type="entry name" value="HisC_aminotrans_2"/>
    <property type="match status" value="1"/>
</dbReference>
<dbReference type="InterPro" id="IPR001917">
    <property type="entry name" value="Aminotrans_II_pyridoxalP_BS"/>
</dbReference>
<dbReference type="InterPro" id="IPR004839">
    <property type="entry name" value="Aminotransferase_I/II_large"/>
</dbReference>
<dbReference type="InterPro" id="IPR005861">
    <property type="entry name" value="HisP_aminotrans"/>
</dbReference>
<dbReference type="InterPro" id="IPR015424">
    <property type="entry name" value="PyrdxlP-dep_Trfase"/>
</dbReference>
<dbReference type="InterPro" id="IPR015421">
    <property type="entry name" value="PyrdxlP-dep_Trfase_major"/>
</dbReference>
<dbReference type="InterPro" id="IPR015422">
    <property type="entry name" value="PyrdxlP-dep_Trfase_small"/>
</dbReference>
<dbReference type="NCBIfam" id="TIGR01141">
    <property type="entry name" value="hisC"/>
    <property type="match status" value="1"/>
</dbReference>
<dbReference type="NCBIfam" id="NF002877">
    <property type="entry name" value="PRK03317.1"/>
    <property type="match status" value="1"/>
</dbReference>
<dbReference type="PANTHER" id="PTHR42885:SF2">
    <property type="entry name" value="HISTIDINOL-PHOSPHATE AMINOTRANSFERASE"/>
    <property type="match status" value="1"/>
</dbReference>
<dbReference type="PANTHER" id="PTHR42885">
    <property type="entry name" value="HISTIDINOL-PHOSPHATE AMINOTRANSFERASE-RELATED"/>
    <property type="match status" value="1"/>
</dbReference>
<dbReference type="Pfam" id="PF00155">
    <property type="entry name" value="Aminotran_1_2"/>
    <property type="match status" value="1"/>
</dbReference>
<dbReference type="SUPFAM" id="SSF53383">
    <property type="entry name" value="PLP-dependent transferases"/>
    <property type="match status" value="1"/>
</dbReference>
<dbReference type="PROSITE" id="PS00599">
    <property type="entry name" value="AA_TRANSFER_CLASS_2"/>
    <property type="match status" value="1"/>
</dbReference>
<gene>
    <name evidence="1" type="primary">hisC</name>
    <name type="ordered locus">RHA1_ro01030</name>
</gene>
<evidence type="ECO:0000255" key="1">
    <source>
        <dbReference type="HAMAP-Rule" id="MF_01023"/>
    </source>
</evidence>
<keyword id="KW-0028">Amino-acid biosynthesis</keyword>
<keyword id="KW-0032">Aminotransferase</keyword>
<keyword id="KW-0368">Histidine biosynthesis</keyword>
<keyword id="KW-0663">Pyridoxal phosphate</keyword>
<keyword id="KW-0808">Transferase</keyword>
<sequence>MTAANVPGSSIGVDALPIRENLRGKSAYGAPQLTVPVQLNTNENPHPPTKALVDDVAESVREAARELHRYPDRDAVALRTDLAAYLVRQTGVPVTVDNVWAANGSNEILQQLLQAFGGPGRSAMGFVPSYSMHPIIADGTETEWLPIFRRADFALDVDAATAAITERRPDVVFVTSPNNPTGHSVGIAELRRVLDAAPGIVIVDEAYAEFSDAPSALTLIDEYPSKLVVSRTMSKAFAFAGGRLGYLAAAPAFIEALLLVRLPYHLSVVTQAAARAALRHANETLASVHALATERVRVSKALDDTGFRVIPSDANFILFGEFTDSAHAWRAYLDRGVLIRDVGIPGYLRATVGLASENDAFIVASDEIAATELTSSGDRG</sequence>
<protein>
    <recommendedName>
        <fullName evidence="1">Histidinol-phosphate aminotransferase</fullName>
        <ecNumber evidence="1">2.6.1.9</ecNumber>
    </recommendedName>
    <alternativeName>
        <fullName evidence="1">Imidazole acetol-phosphate transaminase</fullName>
    </alternativeName>
</protein>